<proteinExistence type="evidence at protein level"/>
<evidence type="ECO:0000250" key="1"/>
<evidence type="ECO:0000250" key="2">
    <source>
        <dbReference type="UniProtKB" id="P04692"/>
    </source>
</evidence>
<evidence type="ECO:0000250" key="3">
    <source>
        <dbReference type="UniProtKB" id="P06753"/>
    </source>
</evidence>
<evidence type="ECO:0000250" key="4">
    <source>
        <dbReference type="UniProtKB" id="P07951"/>
    </source>
</evidence>
<evidence type="ECO:0000250" key="5">
    <source>
        <dbReference type="UniProtKB" id="P09493"/>
    </source>
</evidence>
<evidence type="ECO:0000250" key="6">
    <source>
        <dbReference type="UniProtKB" id="P58774"/>
    </source>
</evidence>
<evidence type="ECO:0000250" key="7">
    <source>
        <dbReference type="UniProtKB" id="P58775"/>
    </source>
</evidence>
<evidence type="ECO:0000250" key="8">
    <source>
        <dbReference type="UniProtKB" id="P58776"/>
    </source>
</evidence>
<evidence type="ECO:0000303" key="9">
    <source>
    </source>
</evidence>
<evidence type="ECO:0000303" key="10">
    <source>
    </source>
</evidence>
<evidence type="ECO:0000305" key="11"/>
<evidence type="ECO:0007744" key="12">
    <source>
    </source>
</evidence>
<feature type="initiator methionine" description="Removed" evidence="8">
    <location>
        <position position="1"/>
    </location>
</feature>
<feature type="chain" id="PRO_0000205633" description="Tropomyosin alpha-3 chain">
    <location>
        <begin position="2"/>
        <end position="285"/>
    </location>
</feature>
<feature type="coiled-coil region" evidence="1">
    <location>
        <begin position="1"/>
        <end position="285"/>
    </location>
</feature>
<feature type="modified residue" description="N-acetylmethionine" evidence="8">
    <location>
        <position position="2"/>
    </location>
</feature>
<feature type="modified residue" description="Phosphothreonine" evidence="4">
    <location>
        <position position="54"/>
    </location>
</feature>
<feature type="modified residue" description="Phosphoserine" evidence="6">
    <location>
        <position position="62"/>
    </location>
</feature>
<feature type="modified residue" description="Phosphoserine" evidence="3">
    <location>
        <position position="88"/>
    </location>
</feature>
<feature type="modified residue" description="Phosphothreonine" evidence="4">
    <location>
        <position position="109"/>
    </location>
</feature>
<feature type="modified residue" description="Phosphoserine" evidence="4">
    <location>
        <position position="207"/>
    </location>
</feature>
<feature type="modified residue" description="Phosphoserine" evidence="7">
    <location>
        <position position="216"/>
    </location>
</feature>
<feature type="modified residue" description="Phosphothreonine" evidence="4">
    <location>
        <position position="253"/>
    </location>
</feature>
<feature type="modified residue" description="Phosphotyrosine" evidence="7">
    <location>
        <position position="262"/>
    </location>
</feature>
<feature type="modified residue" description="Phosphoserine" evidence="12">
    <location>
        <position position="272"/>
    </location>
</feature>
<feature type="modified residue" description="Phosphothreonine" evidence="4">
    <location>
        <position position="283"/>
    </location>
</feature>
<feature type="modified residue" description="Phosphoserine" evidence="12">
    <location>
        <position position="284"/>
    </location>
</feature>
<feature type="splice variant" id="VSP_006608" description="In isoform 2." evidence="9 10">
    <original>MMEAIKKKMQMLKLDKENVLDRAEQAEAEQKQAEERSKQLEDELATMQKKLKGTEDELDKYSEALKDAQEKLELAEKKAAD</original>
    <variation>MAGTTTIEAVKRKIQVLQQQADDAEERAERLQREVEGERRAREQ</variation>
    <location>
        <begin position="1"/>
        <end position="81"/>
    </location>
</feature>
<feature type="splice variant" id="VSP_006609" description="In isoform 2." evidence="9 10">
    <original>KCSELEEELKNVTNNLKSLEAQA</original>
    <variation>RCREMDEQIRLMDQNLKCLSAAE</variation>
    <location>
        <begin position="190"/>
        <end position="212"/>
    </location>
</feature>
<feature type="splice variant" id="VSP_006610" description="In isoform 2." evidence="9 10">
    <original>ELYAQKLKYKAISDELDHALNDMTSI</original>
    <variation>KLKCTKEEHLCTQRMLDQTLLDLNEM</variation>
    <location>
        <begin position="260"/>
        <end position="285"/>
    </location>
</feature>
<feature type="sequence conflict" description="In Ref. 2; AAA03725." evidence="11" ref="2">
    <original>V</original>
    <variation>F</variation>
    <location>
        <position position="19"/>
    </location>
</feature>
<feature type="sequence conflict" description="In Ref. 2; AAA03725." evidence="11" ref="2">
    <original>Q</original>
    <variation>R</variation>
    <location>
        <position position="112"/>
    </location>
</feature>
<feature type="sequence conflict" description="In Ref. 2; AAA03725." evidence="11" ref="2">
    <original>E</original>
    <variation>G</variation>
    <location>
        <position position="181"/>
    </location>
</feature>
<feature type="initiator methionine" description="Removed" evidence="11">
    <location sequence="P21107-2">
        <position position="1"/>
    </location>
</feature>
<feature type="modified residue" description="N-acetylalanine" evidence="11">
    <location sequence="P21107-2">
        <position position="2"/>
    </location>
</feature>
<feature type="modified residue" description="N6-acetyllysine" evidence="11">
    <location sequence="P21107-2">
        <position position="228"/>
    </location>
</feature>
<gene>
    <name type="primary">Tpm3</name>
    <name type="synonym">Tpm-5</name>
    <name type="synonym">Tpm5</name>
</gene>
<comment type="function">
    <text evidence="5">Binds to actin filaments in muscle and non-muscle cells. Plays a central role, in association with the troponin complex, in the calcium dependent regulation of vertebrate striated muscle contraction. Smooth muscle contraction is regulated by interaction with caldesmon. In non-muscle cells is implicated in stabilizing cytoskeleton actin filaments.</text>
</comment>
<comment type="subunit">
    <text evidence="2 3">Homodimer. Heterodimer of an alpha (TPM1, TPM3 or TPM4) and a beta (TPM2) chain (By similarity). Interacts with TMOD1 (By similarity). Interacts with TNNT1 (By similarity).</text>
</comment>
<comment type="subcellular location">
    <molecule>Isoform 2</molecule>
    <subcellularLocation>
        <location>Cytoplasm</location>
        <location>Cytoskeleton</location>
    </subcellularLocation>
</comment>
<comment type="alternative products">
    <event type="alternative splicing"/>
    <isoform>
        <id>P21107-1</id>
        <name>1</name>
        <name>Skeletal muscle</name>
        <sequence type="displayed"/>
    </isoform>
    <isoform>
        <id>P21107-2</id>
        <name>2</name>
        <name>Cytoskeletal</name>
        <sequence type="described" ref="VSP_006608 VSP_006609 VSP_006610"/>
    </isoform>
    <text>Additional isoforms seem to exist.</text>
</comment>
<comment type="domain">
    <text>The molecule is in a coiled coil structure that is formed by 2 polypeptide chains. The sequence exhibits a prominent seven-residues periodicity.</text>
</comment>
<comment type="similarity">
    <text evidence="11">Belongs to the tropomyosin family.</text>
</comment>
<comment type="caution">
    <text evidence="11">It is uncertain whether Met-1 or Met-2 is the initiator.</text>
</comment>
<keyword id="KW-0007">Acetylation</keyword>
<keyword id="KW-0009">Actin-binding</keyword>
<keyword id="KW-0025">Alternative splicing</keyword>
<keyword id="KW-0175">Coiled coil</keyword>
<keyword id="KW-0963">Cytoplasm</keyword>
<keyword id="KW-0206">Cytoskeleton</keyword>
<keyword id="KW-0514">Muscle protein</keyword>
<keyword id="KW-0597">Phosphoprotein</keyword>
<keyword id="KW-1185">Reference proteome</keyword>
<protein>
    <recommendedName>
        <fullName>Tropomyosin alpha-3 chain</fullName>
    </recommendedName>
    <alternativeName>
        <fullName>Gamma-tropomyosin</fullName>
    </alternativeName>
    <alternativeName>
        <fullName>Tropomyosin-3</fullName>
    </alternativeName>
</protein>
<sequence length="285" mass="32994">MMEAIKKKMQMLKLDKENVLDRAEQAEAEQKQAEERSKQLEDELATMQKKLKGTEDELDKYSEALKDAQEKLELAEKKAADAEAEVASLNRRIQLVEEELDRAQERLATALQKLEEAEKAADESERGMKVIENRALKDEEKMELQEIQLKEAKHIAEEADRKYEEVARKLVIIEGDLERTEERAELAESKCSELEEELKNVTNNLKSLEAQAEKYSQKEDKYEEEIKILTDKLKEAETRAEFAERSVAKLEKTIDDLEDELYAQKLKYKAISDELDHALNDMTSI</sequence>
<organism>
    <name type="scientific">Mus musculus</name>
    <name type="common">Mouse</name>
    <dbReference type="NCBI Taxonomy" id="10090"/>
    <lineage>
        <taxon>Eukaryota</taxon>
        <taxon>Metazoa</taxon>
        <taxon>Chordata</taxon>
        <taxon>Craniata</taxon>
        <taxon>Vertebrata</taxon>
        <taxon>Euteleostomi</taxon>
        <taxon>Mammalia</taxon>
        <taxon>Eutheria</taxon>
        <taxon>Euarchontoglires</taxon>
        <taxon>Glires</taxon>
        <taxon>Rodentia</taxon>
        <taxon>Myomorpha</taxon>
        <taxon>Muroidea</taxon>
        <taxon>Muridae</taxon>
        <taxon>Murinae</taxon>
        <taxon>Mus</taxon>
        <taxon>Mus</taxon>
    </lineage>
</organism>
<reference key="1">
    <citation type="journal article" date="1990" name="Biochim. Biophys. Acta">
        <title>Nucleotide sequence of cDNA for nonmuscle tropomyosin 5 of mouse fibroblast.</title>
        <authorList>
            <person name="Takenaga K."/>
            <person name="Nakamura Y."/>
            <person name="Kageyama H."/>
            <person name="Sakiyama S."/>
        </authorList>
    </citation>
    <scope>NUCLEOTIDE SEQUENCE [MRNA] (ISOFORM 2)</scope>
    <source>
        <strain>BALB/cJ</strain>
    </source>
</reference>
<reference key="2">
    <citation type="thesis" date="1993" institute="University of Sydney" country="Australia">
        <title>Regulation of non-muscle isoforms of contractile proteins dring myogenesis.</title>
        <authorList>
            <person name="Hailstones D.L."/>
        </authorList>
    </citation>
    <scope>NUCLEOTIDE SEQUENCE [MRNA] (ISOFORM 1)</scope>
    <source>
        <tissue>Diaphragm</tissue>
    </source>
</reference>
<reference key="3">
    <citation type="journal article" date="2000" name="Biochemistry">
        <title>Tropomyosin 3 increases striated muscle isoform diversity.</title>
        <authorList>
            <person name="Pieples K."/>
            <person name="Wieczorek D.F."/>
        </authorList>
    </citation>
    <scope>NUCLEOTIDE SEQUENCE [MRNA] OF 2-285 (ISOFORM 1)</scope>
    <source>
        <strain>FVB/N</strain>
        <tissue>Skeletal muscle</tissue>
    </source>
</reference>
<reference key="4">
    <citation type="journal article" date="2005" name="Science">
        <title>The transcriptional landscape of the mammalian genome.</title>
        <authorList>
            <person name="Carninci P."/>
            <person name="Kasukawa T."/>
            <person name="Katayama S."/>
            <person name="Gough J."/>
            <person name="Frith M.C."/>
            <person name="Maeda N."/>
            <person name="Oyama R."/>
            <person name="Ravasi T."/>
            <person name="Lenhard B."/>
            <person name="Wells C."/>
            <person name="Kodzius R."/>
            <person name="Shimokawa K."/>
            <person name="Bajic V.B."/>
            <person name="Brenner S.E."/>
            <person name="Batalov S."/>
            <person name="Forrest A.R."/>
            <person name="Zavolan M."/>
            <person name="Davis M.J."/>
            <person name="Wilming L.G."/>
            <person name="Aidinis V."/>
            <person name="Allen J.E."/>
            <person name="Ambesi-Impiombato A."/>
            <person name="Apweiler R."/>
            <person name="Aturaliya R.N."/>
            <person name="Bailey T.L."/>
            <person name="Bansal M."/>
            <person name="Baxter L."/>
            <person name="Beisel K.W."/>
            <person name="Bersano T."/>
            <person name="Bono H."/>
            <person name="Chalk A.M."/>
            <person name="Chiu K.P."/>
            <person name="Choudhary V."/>
            <person name="Christoffels A."/>
            <person name="Clutterbuck D.R."/>
            <person name="Crowe M.L."/>
            <person name="Dalla E."/>
            <person name="Dalrymple B.P."/>
            <person name="de Bono B."/>
            <person name="Della Gatta G."/>
            <person name="di Bernardo D."/>
            <person name="Down T."/>
            <person name="Engstrom P."/>
            <person name="Fagiolini M."/>
            <person name="Faulkner G."/>
            <person name="Fletcher C.F."/>
            <person name="Fukushima T."/>
            <person name="Furuno M."/>
            <person name="Futaki S."/>
            <person name="Gariboldi M."/>
            <person name="Georgii-Hemming P."/>
            <person name="Gingeras T.R."/>
            <person name="Gojobori T."/>
            <person name="Green R.E."/>
            <person name="Gustincich S."/>
            <person name="Harbers M."/>
            <person name="Hayashi Y."/>
            <person name="Hensch T.K."/>
            <person name="Hirokawa N."/>
            <person name="Hill D."/>
            <person name="Huminiecki L."/>
            <person name="Iacono M."/>
            <person name="Ikeo K."/>
            <person name="Iwama A."/>
            <person name="Ishikawa T."/>
            <person name="Jakt M."/>
            <person name="Kanapin A."/>
            <person name="Katoh M."/>
            <person name="Kawasawa Y."/>
            <person name="Kelso J."/>
            <person name="Kitamura H."/>
            <person name="Kitano H."/>
            <person name="Kollias G."/>
            <person name="Krishnan S.P."/>
            <person name="Kruger A."/>
            <person name="Kummerfeld S.K."/>
            <person name="Kurochkin I.V."/>
            <person name="Lareau L.F."/>
            <person name="Lazarevic D."/>
            <person name="Lipovich L."/>
            <person name="Liu J."/>
            <person name="Liuni S."/>
            <person name="McWilliam S."/>
            <person name="Madan Babu M."/>
            <person name="Madera M."/>
            <person name="Marchionni L."/>
            <person name="Matsuda H."/>
            <person name="Matsuzawa S."/>
            <person name="Miki H."/>
            <person name="Mignone F."/>
            <person name="Miyake S."/>
            <person name="Morris K."/>
            <person name="Mottagui-Tabar S."/>
            <person name="Mulder N."/>
            <person name="Nakano N."/>
            <person name="Nakauchi H."/>
            <person name="Ng P."/>
            <person name="Nilsson R."/>
            <person name="Nishiguchi S."/>
            <person name="Nishikawa S."/>
            <person name="Nori F."/>
            <person name="Ohara O."/>
            <person name="Okazaki Y."/>
            <person name="Orlando V."/>
            <person name="Pang K.C."/>
            <person name="Pavan W.J."/>
            <person name="Pavesi G."/>
            <person name="Pesole G."/>
            <person name="Petrovsky N."/>
            <person name="Piazza S."/>
            <person name="Reed J."/>
            <person name="Reid J.F."/>
            <person name="Ring B.Z."/>
            <person name="Ringwald M."/>
            <person name="Rost B."/>
            <person name="Ruan Y."/>
            <person name="Salzberg S.L."/>
            <person name="Sandelin A."/>
            <person name="Schneider C."/>
            <person name="Schoenbach C."/>
            <person name="Sekiguchi K."/>
            <person name="Semple C.A."/>
            <person name="Seno S."/>
            <person name="Sessa L."/>
            <person name="Sheng Y."/>
            <person name="Shibata Y."/>
            <person name="Shimada H."/>
            <person name="Shimada K."/>
            <person name="Silva D."/>
            <person name="Sinclair B."/>
            <person name="Sperling S."/>
            <person name="Stupka E."/>
            <person name="Sugiura K."/>
            <person name="Sultana R."/>
            <person name="Takenaka Y."/>
            <person name="Taki K."/>
            <person name="Tammoja K."/>
            <person name="Tan S.L."/>
            <person name="Tang S."/>
            <person name="Taylor M.S."/>
            <person name="Tegner J."/>
            <person name="Teichmann S.A."/>
            <person name="Ueda H.R."/>
            <person name="van Nimwegen E."/>
            <person name="Verardo R."/>
            <person name="Wei C.L."/>
            <person name="Yagi K."/>
            <person name="Yamanishi H."/>
            <person name="Zabarovsky E."/>
            <person name="Zhu S."/>
            <person name="Zimmer A."/>
            <person name="Hide W."/>
            <person name="Bult C."/>
            <person name="Grimmond S.M."/>
            <person name="Teasdale R.D."/>
            <person name="Liu E.T."/>
            <person name="Brusic V."/>
            <person name="Quackenbush J."/>
            <person name="Wahlestedt C."/>
            <person name="Mattick J.S."/>
            <person name="Hume D.A."/>
            <person name="Kai C."/>
            <person name="Sasaki D."/>
            <person name="Tomaru Y."/>
            <person name="Fukuda S."/>
            <person name="Kanamori-Katayama M."/>
            <person name="Suzuki M."/>
            <person name="Aoki J."/>
            <person name="Arakawa T."/>
            <person name="Iida J."/>
            <person name="Imamura K."/>
            <person name="Itoh M."/>
            <person name="Kato T."/>
            <person name="Kawaji H."/>
            <person name="Kawagashira N."/>
            <person name="Kawashima T."/>
            <person name="Kojima M."/>
            <person name="Kondo S."/>
            <person name="Konno H."/>
            <person name="Nakano K."/>
            <person name="Ninomiya N."/>
            <person name="Nishio T."/>
            <person name="Okada M."/>
            <person name="Plessy C."/>
            <person name="Shibata K."/>
            <person name="Shiraki T."/>
            <person name="Suzuki S."/>
            <person name="Tagami M."/>
            <person name="Waki K."/>
            <person name="Watahiki A."/>
            <person name="Okamura-Oho Y."/>
            <person name="Suzuki H."/>
            <person name="Kawai J."/>
            <person name="Hayashizaki Y."/>
        </authorList>
    </citation>
    <scope>NUCLEOTIDE SEQUENCE [LARGE SCALE MRNA] (ISOFORM 2)</scope>
    <source>
        <strain>NOD</strain>
        <tissue>Thymus</tissue>
    </source>
</reference>
<reference key="5">
    <citation type="journal article" date="1993" name="J. Cell Biol.">
        <title>Differential regulation of tropomyosin isoform organization and gene expression in response to altered actin gene expression.</title>
        <authorList>
            <person name="Schevzov G."/>
            <person name="Lloyd C."/>
            <person name="Hailstones D.L."/>
            <person name="Gunning P."/>
        </authorList>
    </citation>
    <scope>NUCLEOTIDE SEQUENCE [MRNA] OF 244-285 (ISOFORM 1)</scope>
    <source>
        <strain>ICR</strain>
    </source>
</reference>
<reference key="6">
    <citation type="journal article" date="2010" name="Cell">
        <title>A tissue-specific atlas of mouse protein phosphorylation and expression.</title>
        <authorList>
            <person name="Huttlin E.L."/>
            <person name="Jedrychowski M.P."/>
            <person name="Elias J.E."/>
            <person name="Goswami T."/>
            <person name="Rad R."/>
            <person name="Beausoleil S.A."/>
            <person name="Villen J."/>
            <person name="Haas W."/>
            <person name="Sowa M.E."/>
            <person name="Gygi S.P."/>
        </authorList>
    </citation>
    <scope>PHOSPHORYLATION [LARGE SCALE ANALYSIS] AT SER-272 AND SER-284</scope>
    <scope>IDENTIFICATION BY MASS SPECTROMETRY [LARGE SCALE ANALYSIS]</scope>
    <source>
        <tissue>Brain</tissue>
        <tissue>Brown adipose tissue</tissue>
        <tissue>Heart</tissue>
        <tissue>Kidney</tissue>
        <tissue>Lung</tissue>
        <tissue>Pancreas</tissue>
        <tissue>Spleen</tissue>
        <tissue>Testis</tissue>
    </source>
</reference>
<dbReference type="EMBL" id="X53753">
    <property type="protein sequence ID" value="CAA37782.1"/>
    <property type="molecule type" value="mRNA"/>
</dbReference>
<dbReference type="EMBL" id="U04541">
    <property type="protein sequence ID" value="AAA03725.1"/>
    <property type="molecule type" value="mRNA"/>
</dbReference>
<dbReference type="EMBL" id="AF317223">
    <property type="protein sequence ID" value="AAG38596.1"/>
    <property type="molecule type" value="mRNA"/>
</dbReference>
<dbReference type="EMBL" id="AK088111">
    <property type="protein sequence ID" value="BAC40150.1"/>
    <property type="molecule type" value="mRNA"/>
</dbReference>
<dbReference type="EMBL" id="AK088902">
    <property type="protein sequence ID" value="BAC40643.1"/>
    <property type="molecule type" value="mRNA"/>
</dbReference>
<dbReference type="EMBL" id="X72633">
    <property type="protein sequence ID" value="CAA51209.1"/>
    <property type="molecule type" value="mRNA"/>
</dbReference>
<dbReference type="CCDS" id="CCDS57223.1">
    <molecule id="P21107-2"/>
</dbReference>
<dbReference type="PIR" id="I48852">
    <property type="entry name" value="I48852"/>
</dbReference>
<dbReference type="PIR" id="S11390">
    <property type="entry name" value="S11390"/>
</dbReference>
<dbReference type="RefSeq" id="NP_001240667.1">
    <molecule id="P21107-2"/>
    <property type="nucleotide sequence ID" value="NM_001253738.1"/>
</dbReference>
<dbReference type="RefSeq" id="NP_001280677.2">
    <molecule id="P21107-1"/>
    <property type="nucleotide sequence ID" value="NM_001293748.1"/>
</dbReference>
<dbReference type="SMR" id="P21107"/>
<dbReference type="BioGRID" id="208522">
    <property type="interactions" value="29"/>
</dbReference>
<dbReference type="DIP" id="DIP-32061N"/>
<dbReference type="FunCoup" id="P21107">
    <property type="interactions" value="921"/>
</dbReference>
<dbReference type="IntAct" id="P21107">
    <property type="interactions" value="8"/>
</dbReference>
<dbReference type="MINT" id="P21107"/>
<dbReference type="STRING" id="10090.ENSMUSP00000113978"/>
<dbReference type="GlyGen" id="P21107">
    <property type="glycosylation" value="1 site, 1 O-linked glycan (1 site)"/>
</dbReference>
<dbReference type="iPTMnet" id="P21107"/>
<dbReference type="PhosphoSitePlus" id="P21107"/>
<dbReference type="SwissPalm" id="P21107"/>
<dbReference type="REPRODUCTION-2DPAGE" id="P21107"/>
<dbReference type="jPOST" id="P21107"/>
<dbReference type="PaxDb" id="10090-ENSMUSP00000113978"/>
<dbReference type="PeptideAtlas" id="P21107"/>
<dbReference type="ProteomicsDB" id="259062">
    <molecule id="P21107-1"/>
</dbReference>
<dbReference type="ProteomicsDB" id="259063">
    <molecule id="P21107-2"/>
</dbReference>
<dbReference type="Pumba" id="P21107"/>
<dbReference type="Antibodypedia" id="1682">
    <property type="antibodies" value="232 antibodies from 33 providers"/>
</dbReference>
<dbReference type="DNASU" id="59069"/>
<dbReference type="Ensembl" id="ENSMUST00000029549.16">
    <molecule id="P21107-2"/>
    <property type="protein sequence ID" value="ENSMUSP00000029549.9"/>
    <property type="gene ID" value="ENSMUSG00000027940.19"/>
</dbReference>
<dbReference type="GeneID" id="59069"/>
<dbReference type="KEGG" id="mmu:59069"/>
<dbReference type="UCSC" id="uc008qbf.3">
    <molecule id="P21107-1"/>
    <property type="organism name" value="mouse"/>
</dbReference>
<dbReference type="AGR" id="MGI:1890149"/>
<dbReference type="CTD" id="7170"/>
<dbReference type="MGI" id="MGI:1890149">
    <property type="gene designation" value="Tpm3"/>
</dbReference>
<dbReference type="VEuPathDB" id="HostDB:ENSMUSG00000027940"/>
<dbReference type="GeneTree" id="ENSGT01030000234542"/>
<dbReference type="HOGENOM" id="CLU_055027_3_0_1"/>
<dbReference type="InParanoid" id="P21107"/>
<dbReference type="OrthoDB" id="128924at2759"/>
<dbReference type="Reactome" id="R-MMU-390522">
    <property type="pathway name" value="Striated Muscle Contraction"/>
</dbReference>
<dbReference type="Reactome" id="R-MMU-445355">
    <property type="pathway name" value="Smooth Muscle Contraction"/>
</dbReference>
<dbReference type="Reactome" id="R-MMU-9013424">
    <property type="pathway name" value="RHOV GTPase cycle"/>
</dbReference>
<dbReference type="BioGRID-ORCS" id="59069">
    <property type="hits" value="5 hits in 75 CRISPR screens"/>
</dbReference>
<dbReference type="CD-CODE" id="CE726F99">
    <property type="entry name" value="Postsynaptic density"/>
</dbReference>
<dbReference type="ChiTaRS" id="Tpm3">
    <property type="organism name" value="mouse"/>
</dbReference>
<dbReference type="PRO" id="PR:P21107"/>
<dbReference type="Proteomes" id="UP000000589">
    <property type="component" value="Chromosome 3"/>
</dbReference>
<dbReference type="RNAct" id="P21107">
    <property type="molecule type" value="protein"/>
</dbReference>
<dbReference type="Bgee" id="ENSMUSG00000027940">
    <property type="expression patterns" value="Expressed in soleus muscle and 175 other cell types or tissues"/>
</dbReference>
<dbReference type="ExpressionAtlas" id="P21107">
    <property type="expression patterns" value="baseline and differential"/>
</dbReference>
<dbReference type="GO" id="GO:0032154">
    <property type="term" value="C:cleavage furrow"/>
    <property type="evidence" value="ECO:0000314"/>
    <property type="project" value="MGI"/>
</dbReference>
<dbReference type="GO" id="GO:0030863">
    <property type="term" value="C:cortical cytoskeleton"/>
    <property type="evidence" value="ECO:0000314"/>
    <property type="project" value="MGI"/>
</dbReference>
<dbReference type="GO" id="GO:0005737">
    <property type="term" value="C:cytoplasm"/>
    <property type="evidence" value="ECO:0000314"/>
    <property type="project" value="MGI"/>
</dbReference>
<dbReference type="GO" id="GO:0030426">
    <property type="term" value="C:growth cone"/>
    <property type="evidence" value="ECO:0000314"/>
    <property type="project" value="MGI"/>
</dbReference>
<dbReference type="GO" id="GO:0043005">
    <property type="term" value="C:neuron projection"/>
    <property type="evidence" value="ECO:0000314"/>
    <property type="project" value="MGI"/>
</dbReference>
<dbReference type="GO" id="GO:0002102">
    <property type="term" value="C:podosome"/>
    <property type="evidence" value="ECO:0000314"/>
    <property type="project" value="MGI"/>
</dbReference>
<dbReference type="GO" id="GO:0001725">
    <property type="term" value="C:stress fiber"/>
    <property type="evidence" value="ECO:0000266"/>
    <property type="project" value="MGI"/>
</dbReference>
<dbReference type="GO" id="GO:0051015">
    <property type="term" value="F:actin filament binding"/>
    <property type="evidence" value="ECO:0000314"/>
    <property type="project" value="MGI"/>
</dbReference>
<dbReference type="FunFam" id="1.20.5.170:FF:000005">
    <property type="entry name" value="Tropomyosin alpha-1 chain"/>
    <property type="match status" value="1"/>
</dbReference>
<dbReference type="FunFam" id="1.20.5.170:FF:000001">
    <property type="entry name" value="Tropomyosin alpha-1 chain isoform 1"/>
    <property type="match status" value="1"/>
</dbReference>
<dbReference type="FunFam" id="1.20.5.340:FF:000001">
    <property type="entry name" value="Tropomyosin alpha-1 chain isoform 2"/>
    <property type="match status" value="1"/>
</dbReference>
<dbReference type="Gene3D" id="1.20.5.170">
    <property type="match status" value="2"/>
</dbReference>
<dbReference type="Gene3D" id="1.20.5.340">
    <property type="match status" value="1"/>
</dbReference>
<dbReference type="InterPro" id="IPR000533">
    <property type="entry name" value="Tropomyosin"/>
</dbReference>
<dbReference type="PANTHER" id="PTHR19269">
    <property type="entry name" value="TROPOMYOSIN"/>
    <property type="match status" value="1"/>
</dbReference>
<dbReference type="Pfam" id="PF00261">
    <property type="entry name" value="Tropomyosin"/>
    <property type="match status" value="1"/>
</dbReference>
<dbReference type="PRINTS" id="PR00194">
    <property type="entry name" value="TROPOMYOSIN"/>
</dbReference>
<dbReference type="SUPFAM" id="SSF57997">
    <property type="entry name" value="Tropomyosin"/>
    <property type="match status" value="1"/>
</dbReference>
<dbReference type="PROSITE" id="PS00326">
    <property type="entry name" value="TROPOMYOSIN"/>
    <property type="match status" value="1"/>
</dbReference>
<accession>P21107</accession>
<accession>Q09021</accession>
<accession>Q60606</accession>
<accession>Q80SW6</accession>
<accession>Q9EPW3</accession>
<name>TPM3_MOUSE</name>